<feature type="chain" id="PRO_0000115751" description="Major DNA-binding protein">
    <location>
        <begin position="1"/>
        <end position="1209"/>
    </location>
</feature>
<feature type="zinc finger region" evidence="1">
    <location>
        <begin position="503"/>
        <end position="516"/>
    </location>
</feature>
<feature type="region of interest" description="Disordered" evidence="2">
    <location>
        <begin position="290"/>
        <end position="312"/>
    </location>
</feature>
<feature type="region of interest" description="Required for nuclear localization" evidence="1">
    <location>
        <begin position="1182"/>
        <end position="1209"/>
    </location>
</feature>
<feature type="short sequence motif" description="Required for filament formation" evidence="1">
    <location>
        <begin position="849"/>
        <end position="850"/>
    </location>
</feature>
<evidence type="ECO:0000255" key="1">
    <source>
        <dbReference type="HAMAP-Rule" id="MF_04007"/>
    </source>
</evidence>
<evidence type="ECO:0000256" key="2">
    <source>
        <dbReference type="SAM" id="MobiDB-lite"/>
    </source>
</evidence>
<evidence type="ECO:0000305" key="3"/>
<evidence type="ECO:0000312" key="4">
    <source>
        <dbReference type="EMBL" id="AAS45915.1"/>
    </source>
</evidence>
<keyword id="KW-0235">DNA replication</keyword>
<keyword id="KW-0238">DNA-binding</keyword>
<keyword id="KW-1048">Host nucleus</keyword>
<keyword id="KW-0479">Metal-binding</keyword>
<keyword id="KW-0862">Zinc</keyword>
<keyword id="KW-0863">Zinc-finger</keyword>
<comment type="function">
    <text evidence="1">Plays several crucial roles in viral infection. Participates in the opening of the viral DNA origin to initiate replication by interacting with the origin-binding protein. May disrupt loops, hairpins and other secondary structures present on ssDNA to reduce and eliminate pausing of viral DNA polymerase at specific sites during elongation. Promotes viral DNA recombination by performing strand-transfer, characterized by the ability to transfer a DNA strand from a linear duplex to a complementary single-stranded DNA circle. Can also catalyze the renaturation of complementary single strands. Additionally, reorganizes the host cell nucleus, leading to the formation of prereplicative sites and replication compartments. This process is driven by the protein which can form double-helical filaments in the absence of DNA.</text>
</comment>
<comment type="subunit">
    <text evidence="1">Homooligomers. Forms double-helical filaments necessary for the formation of replication compartments within the host nucleus. Interacts with the origin-binding protein. Interacts with the helicase primase complex; this interaction stimulates primer synthesis activity of the helicase-primase complex. Interacts with the DNA polymerase. Interacts with the alkaline exonuclease; this interaction increases its nuclease processivity.</text>
</comment>
<comment type="subcellular location">
    <subcellularLocation>
        <location evidence="1">Host nucleus</location>
    </subcellularLocation>
    <text evidence="1">In the absence of DNA replication, found in the nuclear framework-associated structures (prereplicative sites). As viral DNA replication proceeds, it migrates to globular intranuclear structures (replication compartments).</text>
</comment>
<comment type="similarity">
    <text evidence="1">Belongs to the herpesviridae major DNA-binding protein family.</text>
</comment>
<organism>
    <name type="scientific">Equine herpesvirus 1 (strain V592)</name>
    <name type="common">EHV-1</name>
    <name type="synonym">Equine abortion virus</name>
    <dbReference type="NCBI Taxonomy" id="310273"/>
    <lineage>
        <taxon>Viruses</taxon>
        <taxon>Duplodnaviria</taxon>
        <taxon>Heunggongvirae</taxon>
        <taxon>Peploviricota</taxon>
        <taxon>Herviviricetes</taxon>
        <taxon>Herpesvirales</taxon>
        <taxon>Orthoherpesviridae</taxon>
        <taxon>Alphaherpesvirinae</taxon>
        <taxon>Varicellovirus</taxon>
        <taxon>Varicellovirus equidalpha1</taxon>
        <taxon>Equid alphaherpesvirus 1</taxon>
    </lineage>
</organism>
<protein>
    <recommendedName>
        <fullName evidence="1">Major DNA-binding protein</fullName>
    </recommendedName>
</protein>
<accession>Q6S6P0</accession>
<dbReference type="EMBL" id="AY464052">
    <property type="protein sequence ID" value="AAS45915.1"/>
    <property type="molecule type" value="Genomic_DNA"/>
</dbReference>
<dbReference type="SMR" id="Q6S6P0"/>
<dbReference type="Proteomes" id="UP000008296">
    <property type="component" value="Segment"/>
</dbReference>
<dbReference type="GO" id="GO:0042025">
    <property type="term" value="C:host cell nucleus"/>
    <property type="evidence" value="ECO:0007669"/>
    <property type="project" value="UniProtKB-SubCell"/>
</dbReference>
<dbReference type="GO" id="GO:0003697">
    <property type="term" value="F:single-stranded DNA binding"/>
    <property type="evidence" value="ECO:0007669"/>
    <property type="project" value="InterPro"/>
</dbReference>
<dbReference type="GO" id="GO:0008270">
    <property type="term" value="F:zinc ion binding"/>
    <property type="evidence" value="ECO:0007669"/>
    <property type="project" value="UniProtKB-KW"/>
</dbReference>
<dbReference type="GO" id="GO:0006260">
    <property type="term" value="P:DNA replication"/>
    <property type="evidence" value="ECO:0007669"/>
    <property type="project" value="UniProtKB-KW"/>
</dbReference>
<dbReference type="FunFam" id="1.20.190.40:FF:000002">
    <property type="entry name" value="Major DNA-binding protein"/>
    <property type="match status" value="1"/>
</dbReference>
<dbReference type="Gene3D" id="1.10.150.560">
    <property type="match status" value="1"/>
</dbReference>
<dbReference type="Gene3D" id="1.20.190.40">
    <property type="entry name" value="Viral ssDNA binding protein, head domain"/>
    <property type="match status" value="2"/>
</dbReference>
<dbReference type="HAMAP" id="MF_04007">
    <property type="entry name" value="HSV_DNBI"/>
    <property type="match status" value="1"/>
</dbReference>
<dbReference type="InterPro" id="IPR035989">
    <property type="entry name" value="DBP_sf"/>
</dbReference>
<dbReference type="InterPro" id="IPR043031">
    <property type="entry name" value="Viral_ssDBP_head"/>
</dbReference>
<dbReference type="InterPro" id="IPR000635">
    <property type="entry name" value="Viral_ssDNA-bd"/>
</dbReference>
<dbReference type="Pfam" id="PF00747">
    <property type="entry name" value="Viral_DNA_bp"/>
    <property type="match status" value="1"/>
</dbReference>
<dbReference type="SUPFAM" id="SSF118208">
    <property type="entry name" value="Viral ssDNA binding protein"/>
    <property type="match status" value="1"/>
</dbReference>
<name>DNBI_EHV1V</name>
<proteinExistence type="inferred from homology"/>
<sequence length="1209" mass="129956">MESAPKTVSLPVSPLGYVYARQKASLQTGTVSLTAARSVDSDLAVLPVIRGLTVEQTFTTNVAVVAGSKTTGLGGTGITLKLTPSHFNPSAFVFYGGSVIGASSNAPNLTRACEAARRRFGFSAFSSPPVENAVETSGEEICASLNLSPETTALYLVVTESFKEMVYVCNTFLHYGGTSTVTIDGQDAMKIPIYPVQLYMPDVNRLASEPFNAKHRSIGDEFVYSRPFFNSDLCRLLHGYVLGPAAVALRVRNLDGVARGAAHLALDENHEGSVLPQDVTFTLFDSTQGNAGKGSGRAQRQGDGSGSKNSASSGIERRLASVMAADTALSVDSIMGAGIYDTELPSVEDWPVLSSGDDTESLEALGAYAARLSGLVGAMVFSANSVLYMTEVDDGGPADGKDGSNPSYHRFYLIAAPYVAGNPQTDKDGRVLPHTADQQAAPINGSNQEFSLDYLALACGFCPQILARLLFYLERCDAGTFGGRNETDALRYLANTLESDVPCGLCNQATRPACAHTTLHRLRQRLPRFGAPVRAPIGIFGTMNSAYSDCDVLGNYASYGALKRPNDNEAPKSIMQDTYRATMERLVNELEQAKLIDKETLAQASPCSAPTSVVHDQASFIGLLSNIKDTIEGAAEQFMRTLVEARDFKIREGLADANHTMSISLDPYSSSFCPVTSFLARRTVFAVLQDLVLSQCHCLFYGQSVEGRNFRNQFQPVLRRRFLDMLNGGFITAKTVTVTVSDSGVLAPDLTRPASEPPTKDYDGDMARVSMEVLRDLRVKNRVLFSNGGANMSEAARARVAGMASAYRRPDKGSNILNGAVGFLVKQYHGVLFPRGHPPGIDTPNPQWFWTLLQRNQMPARLLSKEDIETITAIKRFSDEYSAINFINLTPNNIGELAQFYFANLVLKYCDHSQYFINGLTAIVVGSRRPRDPAAVLAWIDRTINGAADVEPAAQEVLQRLGSNPAAWTGTFTSTNMVRYVMDQRPMVVIGLSISKYNGSAGNNRVFQAGNWNGLNGGKNVCPLMAFDRTRRFVLACPRVGFTCEAGGFGTGVRENTLSEQVRGIVSEGGPMVQTAVFAAVLHALGARTQHLAVDDWIGLVDDEFLAASLDALNATVVDQFGEWSVEAAQELVKNMEAQTTAGAVAAGEGAFDFGACVGDTPQQSTSAFNGGLAMAAAPAGQKRSLPDDILFDMGAPPEKKSGLTFDML</sequence>
<reference evidence="3 4" key="1">
    <citation type="submission" date="2003-11" db="EMBL/GenBank/DDBJ databases">
        <authorList>
            <person name="Davis-Poynter N."/>
            <person name="Nugent J."/>
            <person name="Birch-Machin I."/>
            <person name="Allen G.P."/>
        </authorList>
    </citation>
    <scope>NUCLEOTIDE SEQUENCE [LARGE SCALE GENOMIC DNA]</scope>
</reference>
<organismHost>
    <name type="scientific">Equus caballus</name>
    <name type="common">Horse</name>
    <dbReference type="NCBI Taxonomy" id="9796"/>
</organismHost>
<gene>
    <name evidence="1" type="primary">DBP</name>
    <name type="ordered locus">31</name>
</gene>